<keyword id="KW-0963">Cytoplasm</keyword>
<keyword id="KW-0227">DNA damage</keyword>
<keyword id="KW-0233">DNA recombination</keyword>
<keyword id="KW-0234">DNA repair</keyword>
<keyword id="KW-0238">DNA-binding</keyword>
<keyword id="KW-0742">SOS response</keyword>
<gene>
    <name evidence="1" type="primary">ruvA</name>
    <name type="ordered locus">EcHS_A1954</name>
</gene>
<protein>
    <recommendedName>
        <fullName evidence="1">Holliday junction branch migration complex subunit RuvA</fullName>
    </recommendedName>
</protein>
<proteinExistence type="inferred from homology"/>
<accession>A8A161</accession>
<sequence>MIGRLRGIIIEKQPPLVLIEVGGVGYEVHMPMTCFYELPEAGQEAIVFTHFVVREDAQLLYGFNNKQERTLFKELIKTNGVGPKLALAILSGMSAQQFVNAVEREEVGALVKLPGIGKKTAERLIVEMKDRFKGLHGDLFTPAADLVLTSPASPATNDAEQEAVAALVALGYKPQEASRMVSKIARPDASSETLIREALRAAL</sequence>
<feature type="chain" id="PRO_1000057237" description="Holliday junction branch migration complex subunit RuvA">
    <location>
        <begin position="1"/>
        <end position="203"/>
    </location>
</feature>
<feature type="region of interest" description="Domain I" evidence="1">
    <location>
        <begin position="1"/>
        <end position="64"/>
    </location>
</feature>
<feature type="region of interest" description="Domain II" evidence="1">
    <location>
        <begin position="65"/>
        <end position="142"/>
    </location>
</feature>
<feature type="region of interest" description="Flexible linker" evidence="1">
    <location>
        <begin position="143"/>
        <end position="154"/>
    </location>
</feature>
<feature type="region of interest" description="Domain III" evidence="1">
    <location>
        <begin position="155"/>
        <end position="203"/>
    </location>
</feature>
<name>RUVA_ECOHS</name>
<dbReference type="EMBL" id="CP000802">
    <property type="protein sequence ID" value="ABV06265.1"/>
    <property type="molecule type" value="Genomic_DNA"/>
</dbReference>
<dbReference type="RefSeq" id="WP_000580327.1">
    <property type="nucleotide sequence ID" value="NC_009800.1"/>
</dbReference>
<dbReference type="SMR" id="A8A161"/>
<dbReference type="KEGG" id="ecx:EcHS_A1954"/>
<dbReference type="HOGENOM" id="CLU_087936_0_0_6"/>
<dbReference type="GO" id="GO:0005737">
    <property type="term" value="C:cytoplasm"/>
    <property type="evidence" value="ECO:0007669"/>
    <property type="project" value="UniProtKB-SubCell"/>
</dbReference>
<dbReference type="GO" id="GO:0009379">
    <property type="term" value="C:Holliday junction helicase complex"/>
    <property type="evidence" value="ECO:0007669"/>
    <property type="project" value="InterPro"/>
</dbReference>
<dbReference type="GO" id="GO:0048476">
    <property type="term" value="C:Holliday junction resolvase complex"/>
    <property type="evidence" value="ECO:0007669"/>
    <property type="project" value="UniProtKB-UniRule"/>
</dbReference>
<dbReference type="GO" id="GO:0005524">
    <property type="term" value="F:ATP binding"/>
    <property type="evidence" value="ECO:0007669"/>
    <property type="project" value="InterPro"/>
</dbReference>
<dbReference type="GO" id="GO:0000400">
    <property type="term" value="F:four-way junction DNA binding"/>
    <property type="evidence" value="ECO:0007669"/>
    <property type="project" value="UniProtKB-UniRule"/>
</dbReference>
<dbReference type="GO" id="GO:0009378">
    <property type="term" value="F:four-way junction helicase activity"/>
    <property type="evidence" value="ECO:0007669"/>
    <property type="project" value="InterPro"/>
</dbReference>
<dbReference type="GO" id="GO:0006310">
    <property type="term" value="P:DNA recombination"/>
    <property type="evidence" value="ECO:0007669"/>
    <property type="project" value="UniProtKB-UniRule"/>
</dbReference>
<dbReference type="GO" id="GO:0006281">
    <property type="term" value="P:DNA repair"/>
    <property type="evidence" value="ECO:0007669"/>
    <property type="project" value="UniProtKB-UniRule"/>
</dbReference>
<dbReference type="GO" id="GO:0009432">
    <property type="term" value="P:SOS response"/>
    <property type="evidence" value="ECO:0007669"/>
    <property type="project" value="UniProtKB-UniRule"/>
</dbReference>
<dbReference type="CDD" id="cd14332">
    <property type="entry name" value="UBA_RuvA_C"/>
    <property type="match status" value="1"/>
</dbReference>
<dbReference type="FunFam" id="1.10.150.20:FF:000012">
    <property type="entry name" value="Holliday junction ATP-dependent DNA helicase RuvA"/>
    <property type="match status" value="1"/>
</dbReference>
<dbReference type="FunFam" id="1.10.8.10:FF:000008">
    <property type="entry name" value="Holliday junction ATP-dependent DNA helicase RuvA"/>
    <property type="match status" value="1"/>
</dbReference>
<dbReference type="FunFam" id="2.40.50.140:FF:000083">
    <property type="entry name" value="Holliday junction ATP-dependent DNA helicase RuvA"/>
    <property type="match status" value="1"/>
</dbReference>
<dbReference type="Gene3D" id="1.10.150.20">
    <property type="entry name" value="5' to 3' exonuclease, C-terminal subdomain"/>
    <property type="match status" value="1"/>
</dbReference>
<dbReference type="Gene3D" id="1.10.8.10">
    <property type="entry name" value="DNA helicase RuvA subunit, C-terminal domain"/>
    <property type="match status" value="1"/>
</dbReference>
<dbReference type="Gene3D" id="2.40.50.140">
    <property type="entry name" value="Nucleic acid-binding proteins"/>
    <property type="match status" value="1"/>
</dbReference>
<dbReference type="HAMAP" id="MF_00031">
    <property type="entry name" value="DNA_HJ_migration_RuvA"/>
    <property type="match status" value="1"/>
</dbReference>
<dbReference type="InterPro" id="IPR013849">
    <property type="entry name" value="DNA_helicase_Holl-junc_RuvA_I"/>
</dbReference>
<dbReference type="InterPro" id="IPR003583">
    <property type="entry name" value="Hlx-hairpin-Hlx_DNA-bd_motif"/>
</dbReference>
<dbReference type="InterPro" id="IPR012340">
    <property type="entry name" value="NA-bd_OB-fold"/>
</dbReference>
<dbReference type="InterPro" id="IPR000085">
    <property type="entry name" value="RuvA"/>
</dbReference>
<dbReference type="InterPro" id="IPR010994">
    <property type="entry name" value="RuvA_2-like"/>
</dbReference>
<dbReference type="InterPro" id="IPR011114">
    <property type="entry name" value="RuvA_C"/>
</dbReference>
<dbReference type="InterPro" id="IPR036267">
    <property type="entry name" value="RuvA_C_sf"/>
</dbReference>
<dbReference type="NCBIfam" id="TIGR00084">
    <property type="entry name" value="ruvA"/>
    <property type="match status" value="1"/>
</dbReference>
<dbReference type="Pfam" id="PF14520">
    <property type="entry name" value="HHH_5"/>
    <property type="match status" value="1"/>
</dbReference>
<dbReference type="Pfam" id="PF07499">
    <property type="entry name" value="RuvA_C"/>
    <property type="match status" value="1"/>
</dbReference>
<dbReference type="Pfam" id="PF01330">
    <property type="entry name" value="RuvA_N"/>
    <property type="match status" value="1"/>
</dbReference>
<dbReference type="SMART" id="SM00278">
    <property type="entry name" value="HhH1"/>
    <property type="match status" value="2"/>
</dbReference>
<dbReference type="SUPFAM" id="SSF46929">
    <property type="entry name" value="DNA helicase RuvA subunit, C-terminal domain"/>
    <property type="match status" value="1"/>
</dbReference>
<dbReference type="SUPFAM" id="SSF50249">
    <property type="entry name" value="Nucleic acid-binding proteins"/>
    <property type="match status" value="1"/>
</dbReference>
<dbReference type="SUPFAM" id="SSF47781">
    <property type="entry name" value="RuvA domain 2-like"/>
    <property type="match status" value="1"/>
</dbReference>
<reference key="1">
    <citation type="journal article" date="2008" name="J. Bacteriol.">
        <title>The pangenome structure of Escherichia coli: comparative genomic analysis of E. coli commensal and pathogenic isolates.</title>
        <authorList>
            <person name="Rasko D.A."/>
            <person name="Rosovitz M.J."/>
            <person name="Myers G.S.A."/>
            <person name="Mongodin E.F."/>
            <person name="Fricke W.F."/>
            <person name="Gajer P."/>
            <person name="Crabtree J."/>
            <person name="Sebaihia M."/>
            <person name="Thomson N.R."/>
            <person name="Chaudhuri R."/>
            <person name="Henderson I.R."/>
            <person name="Sperandio V."/>
            <person name="Ravel J."/>
        </authorList>
    </citation>
    <scope>NUCLEOTIDE SEQUENCE [LARGE SCALE GENOMIC DNA]</scope>
    <source>
        <strain>HS</strain>
    </source>
</reference>
<evidence type="ECO:0000255" key="1">
    <source>
        <dbReference type="HAMAP-Rule" id="MF_00031"/>
    </source>
</evidence>
<organism>
    <name type="scientific">Escherichia coli O9:H4 (strain HS)</name>
    <dbReference type="NCBI Taxonomy" id="331112"/>
    <lineage>
        <taxon>Bacteria</taxon>
        <taxon>Pseudomonadati</taxon>
        <taxon>Pseudomonadota</taxon>
        <taxon>Gammaproteobacteria</taxon>
        <taxon>Enterobacterales</taxon>
        <taxon>Enterobacteriaceae</taxon>
        <taxon>Escherichia</taxon>
    </lineage>
</organism>
<comment type="function">
    <text evidence="1">The RuvA-RuvB-RuvC complex processes Holliday junction (HJ) DNA during genetic recombination and DNA repair, while the RuvA-RuvB complex plays an important role in the rescue of blocked DNA replication forks via replication fork reversal (RFR). RuvA specifically binds to HJ cruciform DNA, conferring on it an open structure. The RuvB hexamer acts as an ATP-dependent pump, pulling dsDNA into and through the RuvAB complex. HJ branch migration allows RuvC to scan DNA until it finds its consensus sequence, where it cleaves and resolves the cruciform DNA.</text>
</comment>
<comment type="subunit">
    <text evidence="1">Homotetramer. Forms an RuvA(8)-RuvB(12)-Holliday junction (HJ) complex. HJ DNA is sandwiched between 2 RuvA tetramers; dsDNA enters through RuvA and exits via RuvB. An RuvB hexamer assembles on each DNA strand where it exits the tetramer. Each RuvB hexamer is contacted by two RuvA subunits (via domain III) on 2 adjacent RuvB subunits; this complex drives branch migration. In the full resolvosome a probable DNA-RuvA(4)-RuvB(12)-RuvC(2) complex forms which resolves the HJ.</text>
</comment>
<comment type="subcellular location">
    <subcellularLocation>
        <location evidence="1">Cytoplasm</location>
    </subcellularLocation>
</comment>
<comment type="domain">
    <text evidence="1">Has three domains with a flexible linker between the domains II and III and assumes an 'L' shape. Domain III is highly mobile and contacts RuvB.</text>
</comment>
<comment type="similarity">
    <text evidence="1">Belongs to the RuvA family.</text>
</comment>